<dbReference type="EMBL" id="CP000319">
    <property type="protein sequence ID" value="ABE60930.1"/>
    <property type="molecule type" value="Genomic_DNA"/>
</dbReference>
<dbReference type="RefSeq" id="WP_011508637.1">
    <property type="nucleotide sequence ID" value="NC_007964.1"/>
</dbReference>
<dbReference type="SMR" id="Q1QS67"/>
<dbReference type="STRING" id="323097.Nham_0028"/>
<dbReference type="KEGG" id="nha:Nham_0028"/>
<dbReference type="eggNOG" id="COG0779">
    <property type="taxonomic scope" value="Bacteria"/>
</dbReference>
<dbReference type="HOGENOM" id="CLU_070525_0_0_5"/>
<dbReference type="OrthoDB" id="9805006at2"/>
<dbReference type="Proteomes" id="UP000001953">
    <property type="component" value="Chromosome"/>
</dbReference>
<dbReference type="GO" id="GO:0005829">
    <property type="term" value="C:cytosol"/>
    <property type="evidence" value="ECO:0007669"/>
    <property type="project" value="TreeGrafter"/>
</dbReference>
<dbReference type="GO" id="GO:0000028">
    <property type="term" value="P:ribosomal small subunit assembly"/>
    <property type="evidence" value="ECO:0007669"/>
    <property type="project" value="TreeGrafter"/>
</dbReference>
<dbReference type="GO" id="GO:0006412">
    <property type="term" value="P:translation"/>
    <property type="evidence" value="ECO:0007669"/>
    <property type="project" value="TreeGrafter"/>
</dbReference>
<dbReference type="CDD" id="cd01734">
    <property type="entry name" value="YlxS_C"/>
    <property type="match status" value="1"/>
</dbReference>
<dbReference type="Gene3D" id="2.30.30.180">
    <property type="entry name" value="Ribosome maturation factor RimP, C-terminal domain"/>
    <property type="match status" value="1"/>
</dbReference>
<dbReference type="Gene3D" id="3.30.300.70">
    <property type="entry name" value="RimP-like superfamily, N-terminal"/>
    <property type="match status" value="1"/>
</dbReference>
<dbReference type="HAMAP" id="MF_01077">
    <property type="entry name" value="RimP"/>
    <property type="match status" value="1"/>
</dbReference>
<dbReference type="InterPro" id="IPR003728">
    <property type="entry name" value="Ribosome_maturation_RimP"/>
</dbReference>
<dbReference type="InterPro" id="IPR028998">
    <property type="entry name" value="RimP_C"/>
</dbReference>
<dbReference type="InterPro" id="IPR036847">
    <property type="entry name" value="RimP_C_sf"/>
</dbReference>
<dbReference type="InterPro" id="IPR028989">
    <property type="entry name" value="RimP_N"/>
</dbReference>
<dbReference type="InterPro" id="IPR035956">
    <property type="entry name" value="RimP_N_sf"/>
</dbReference>
<dbReference type="NCBIfam" id="NF000932">
    <property type="entry name" value="PRK00092.2-5"/>
    <property type="match status" value="1"/>
</dbReference>
<dbReference type="NCBIfam" id="NF000933">
    <property type="entry name" value="PRK00092.2-6"/>
    <property type="match status" value="1"/>
</dbReference>
<dbReference type="PANTHER" id="PTHR33867">
    <property type="entry name" value="RIBOSOME MATURATION FACTOR RIMP"/>
    <property type="match status" value="1"/>
</dbReference>
<dbReference type="PANTHER" id="PTHR33867:SF1">
    <property type="entry name" value="RIBOSOME MATURATION FACTOR RIMP"/>
    <property type="match status" value="1"/>
</dbReference>
<dbReference type="Pfam" id="PF17384">
    <property type="entry name" value="DUF150_C"/>
    <property type="match status" value="1"/>
</dbReference>
<dbReference type="Pfam" id="PF02576">
    <property type="entry name" value="RimP_N"/>
    <property type="match status" value="1"/>
</dbReference>
<dbReference type="SUPFAM" id="SSF74942">
    <property type="entry name" value="YhbC-like, C-terminal domain"/>
    <property type="match status" value="1"/>
</dbReference>
<dbReference type="SUPFAM" id="SSF75420">
    <property type="entry name" value="YhbC-like, N-terminal domain"/>
    <property type="match status" value="1"/>
</dbReference>
<evidence type="ECO:0000255" key="1">
    <source>
        <dbReference type="HAMAP-Rule" id="MF_01077"/>
    </source>
</evidence>
<evidence type="ECO:0000256" key="2">
    <source>
        <dbReference type="SAM" id="MobiDB-lite"/>
    </source>
</evidence>
<name>RIMP_NITHX</name>
<gene>
    <name evidence="1" type="primary">rimP</name>
    <name type="ordered locus">Nham_0028</name>
</gene>
<keyword id="KW-0963">Cytoplasm</keyword>
<keyword id="KW-1185">Reference proteome</keyword>
<keyword id="KW-0690">Ribosome biogenesis</keyword>
<comment type="function">
    <text evidence="1">Required for maturation of 30S ribosomal subunits.</text>
</comment>
<comment type="subcellular location">
    <subcellularLocation>
        <location evidence="1">Cytoplasm</location>
    </subcellularLocation>
</comment>
<comment type="similarity">
    <text evidence="1">Belongs to the RimP family.</text>
</comment>
<feature type="chain" id="PRO_0000384720" description="Ribosome maturation factor RimP">
    <location>
        <begin position="1"/>
        <end position="263"/>
    </location>
</feature>
<feature type="region of interest" description="Disordered" evidence="2">
    <location>
        <begin position="192"/>
        <end position="263"/>
    </location>
</feature>
<feature type="compositionally biased region" description="Basic residues" evidence="2">
    <location>
        <begin position="217"/>
        <end position="231"/>
    </location>
</feature>
<feature type="compositionally biased region" description="Basic and acidic residues" evidence="2">
    <location>
        <begin position="232"/>
        <end position="257"/>
    </location>
</feature>
<accession>Q1QS67</accession>
<protein>
    <recommendedName>
        <fullName evidence="1">Ribosome maturation factor RimP</fullName>
    </recommendedName>
</protein>
<sequence>MTDPVDQIPDHELLDEPRLVVEPGVAARVSSVVAPVLQGMGYRLVRIKVSGEYGCTVQIMAERPDGSMQIEDCEAISKALSPVLDVADPIDKAYRLEISSPGIDRPLVRRSDFERHAGHLVKVEMAVAHQGRKRFRGILQGVKDNAIRLHRDDVQNVDESEVLLVMEDIADARLVLTDELIAESMRRGKIAEREMKRDLGILPPPPPHAKNDPARSPARRNAPKPKLKSTAKAHEKKPPKNTKEHRLAAERLRRGEIDPIEGE</sequence>
<organism>
    <name type="scientific">Nitrobacter hamburgensis (strain DSM 10229 / NCIMB 13809 / X14)</name>
    <dbReference type="NCBI Taxonomy" id="323097"/>
    <lineage>
        <taxon>Bacteria</taxon>
        <taxon>Pseudomonadati</taxon>
        <taxon>Pseudomonadota</taxon>
        <taxon>Alphaproteobacteria</taxon>
        <taxon>Hyphomicrobiales</taxon>
        <taxon>Nitrobacteraceae</taxon>
        <taxon>Nitrobacter</taxon>
    </lineage>
</organism>
<reference key="1">
    <citation type="submission" date="2006-03" db="EMBL/GenBank/DDBJ databases">
        <title>Complete sequence of chromosome of Nitrobacter hamburgensis X14.</title>
        <authorList>
            <consortium name="US DOE Joint Genome Institute"/>
            <person name="Copeland A."/>
            <person name="Lucas S."/>
            <person name="Lapidus A."/>
            <person name="Barry K."/>
            <person name="Detter J.C."/>
            <person name="Glavina del Rio T."/>
            <person name="Hammon N."/>
            <person name="Israni S."/>
            <person name="Dalin E."/>
            <person name="Tice H."/>
            <person name="Pitluck S."/>
            <person name="Chain P."/>
            <person name="Malfatti S."/>
            <person name="Shin M."/>
            <person name="Vergez L."/>
            <person name="Schmutz J."/>
            <person name="Larimer F."/>
            <person name="Land M."/>
            <person name="Hauser L."/>
            <person name="Kyrpides N."/>
            <person name="Ivanova N."/>
            <person name="Ward B."/>
            <person name="Arp D."/>
            <person name="Klotz M."/>
            <person name="Stein L."/>
            <person name="O'Mullan G."/>
            <person name="Starkenburg S."/>
            <person name="Sayavedra L."/>
            <person name="Poret-Peterson A.T."/>
            <person name="Gentry M.E."/>
            <person name="Bruce D."/>
            <person name="Richardson P."/>
        </authorList>
    </citation>
    <scope>NUCLEOTIDE SEQUENCE [LARGE SCALE GENOMIC DNA]</scope>
    <source>
        <strain>DSM 10229 / NCIMB 13809 / X14</strain>
    </source>
</reference>
<proteinExistence type="inferred from homology"/>